<name>HTPX_SALCH</name>
<organism>
    <name type="scientific">Salmonella choleraesuis (strain SC-B67)</name>
    <dbReference type="NCBI Taxonomy" id="321314"/>
    <lineage>
        <taxon>Bacteria</taxon>
        <taxon>Pseudomonadati</taxon>
        <taxon>Pseudomonadota</taxon>
        <taxon>Gammaproteobacteria</taxon>
        <taxon>Enterobacterales</taxon>
        <taxon>Enterobacteriaceae</taxon>
        <taxon>Salmonella</taxon>
    </lineage>
</organism>
<accession>Q57NG5</accession>
<feature type="chain" id="PRO_1000020930" description="Protease HtpX">
    <location>
        <begin position="1"/>
        <end position="293"/>
    </location>
</feature>
<feature type="transmembrane region" description="Helical" evidence="1">
    <location>
        <begin position="4"/>
        <end position="24"/>
    </location>
</feature>
<feature type="transmembrane region" description="Helical" evidence="1">
    <location>
        <begin position="34"/>
        <end position="54"/>
    </location>
</feature>
<feature type="transmembrane region" description="Helical" evidence="1">
    <location>
        <begin position="158"/>
        <end position="178"/>
    </location>
</feature>
<feature type="transmembrane region" description="Helical" evidence="1">
    <location>
        <begin position="193"/>
        <end position="213"/>
    </location>
</feature>
<feature type="active site" evidence="1">
    <location>
        <position position="140"/>
    </location>
</feature>
<feature type="binding site" evidence="1">
    <location>
        <position position="139"/>
    </location>
    <ligand>
        <name>Zn(2+)</name>
        <dbReference type="ChEBI" id="CHEBI:29105"/>
        <note>catalytic</note>
    </ligand>
</feature>
<feature type="binding site" evidence="1">
    <location>
        <position position="143"/>
    </location>
    <ligand>
        <name>Zn(2+)</name>
        <dbReference type="ChEBI" id="CHEBI:29105"/>
        <note>catalytic</note>
    </ligand>
</feature>
<feature type="binding site" evidence="1">
    <location>
        <position position="222"/>
    </location>
    <ligand>
        <name>Zn(2+)</name>
        <dbReference type="ChEBI" id="CHEBI:29105"/>
        <note>catalytic</note>
    </ligand>
</feature>
<sequence>MMRIALFLLTNLAVMVVFGLVLSLTGIQSSSVQGLLIMALLFGFGGSFISLLMSKWMALKSVGGEVIEQPRNERERWLMNTVATQARQAGIAMPQVAIYHAPDINAFATGARRDASLVAVSTGLLQNMSPDEAEAVIAHEISHIANGDMVTMTLIQGVVNTFVIFISRIIAQIAAGFLGGNRDEGEGSNGNPLIYFAVATVLELVFGILASIITMWFSRYREFHADAGSAKLVGREKMIAALQRLKTSYEPQEATSMMAFCINGKSKSLSELFMTHPPLDKRIEALRSGEYLK</sequence>
<gene>
    <name evidence="1" type="primary">htpX</name>
    <name type="ordered locus">SCH_1840</name>
</gene>
<reference key="1">
    <citation type="journal article" date="2005" name="Nucleic Acids Res.">
        <title>The genome sequence of Salmonella enterica serovar Choleraesuis, a highly invasive and resistant zoonotic pathogen.</title>
        <authorList>
            <person name="Chiu C.-H."/>
            <person name="Tang P."/>
            <person name="Chu C."/>
            <person name="Hu S."/>
            <person name="Bao Q."/>
            <person name="Yu J."/>
            <person name="Chou Y.-Y."/>
            <person name="Wang H.-S."/>
            <person name="Lee Y.-S."/>
        </authorList>
    </citation>
    <scope>NUCLEOTIDE SEQUENCE [LARGE SCALE GENOMIC DNA]</scope>
    <source>
        <strain>SC-B67</strain>
    </source>
</reference>
<proteinExistence type="inferred from homology"/>
<dbReference type="EC" id="3.4.24.-" evidence="1"/>
<dbReference type="EMBL" id="AE017220">
    <property type="protein sequence ID" value="AAX65746.1"/>
    <property type="molecule type" value="Genomic_DNA"/>
</dbReference>
<dbReference type="RefSeq" id="WP_000984498.1">
    <property type="nucleotide sequence ID" value="NC_006905.1"/>
</dbReference>
<dbReference type="SMR" id="Q57NG5"/>
<dbReference type="MEROPS" id="M48.002"/>
<dbReference type="GeneID" id="66756319"/>
<dbReference type="KEGG" id="sec:SCH_1840"/>
<dbReference type="HOGENOM" id="CLU_042266_1_0_6"/>
<dbReference type="Proteomes" id="UP000000538">
    <property type="component" value="Chromosome"/>
</dbReference>
<dbReference type="GO" id="GO:0005886">
    <property type="term" value="C:plasma membrane"/>
    <property type="evidence" value="ECO:0007669"/>
    <property type="project" value="UniProtKB-SubCell"/>
</dbReference>
<dbReference type="GO" id="GO:0004222">
    <property type="term" value="F:metalloendopeptidase activity"/>
    <property type="evidence" value="ECO:0007669"/>
    <property type="project" value="UniProtKB-UniRule"/>
</dbReference>
<dbReference type="GO" id="GO:0008270">
    <property type="term" value="F:zinc ion binding"/>
    <property type="evidence" value="ECO:0007669"/>
    <property type="project" value="UniProtKB-UniRule"/>
</dbReference>
<dbReference type="GO" id="GO:0006508">
    <property type="term" value="P:proteolysis"/>
    <property type="evidence" value="ECO:0007669"/>
    <property type="project" value="UniProtKB-KW"/>
</dbReference>
<dbReference type="CDD" id="cd07335">
    <property type="entry name" value="M48B_HtpX_like"/>
    <property type="match status" value="1"/>
</dbReference>
<dbReference type="FunFam" id="3.30.2010.10:FF:000001">
    <property type="entry name" value="Protease HtpX"/>
    <property type="match status" value="1"/>
</dbReference>
<dbReference type="Gene3D" id="3.30.2010.10">
    <property type="entry name" value="Metalloproteases ('zincins'), catalytic domain"/>
    <property type="match status" value="1"/>
</dbReference>
<dbReference type="HAMAP" id="MF_00188">
    <property type="entry name" value="Pept_M48_protease_HtpX"/>
    <property type="match status" value="1"/>
</dbReference>
<dbReference type="InterPro" id="IPR050083">
    <property type="entry name" value="HtpX_protease"/>
</dbReference>
<dbReference type="InterPro" id="IPR022919">
    <property type="entry name" value="Pept_M48_protease_HtpX"/>
</dbReference>
<dbReference type="InterPro" id="IPR001915">
    <property type="entry name" value="Peptidase_M48"/>
</dbReference>
<dbReference type="NCBIfam" id="NF003965">
    <property type="entry name" value="PRK05457.1"/>
    <property type="match status" value="1"/>
</dbReference>
<dbReference type="PANTHER" id="PTHR43221">
    <property type="entry name" value="PROTEASE HTPX"/>
    <property type="match status" value="1"/>
</dbReference>
<dbReference type="PANTHER" id="PTHR43221:SF1">
    <property type="entry name" value="PROTEASE HTPX"/>
    <property type="match status" value="1"/>
</dbReference>
<dbReference type="Pfam" id="PF01435">
    <property type="entry name" value="Peptidase_M48"/>
    <property type="match status" value="1"/>
</dbReference>
<keyword id="KW-0997">Cell inner membrane</keyword>
<keyword id="KW-1003">Cell membrane</keyword>
<keyword id="KW-0378">Hydrolase</keyword>
<keyword id="KW-0472">Membrane</keyword>
<keyword id="KW-0479">Metal-binding</keyword>
<keyword id="KW-0482">Metalloprotease</keyword>
<keyword id="KW-0645">Protease</keyword>
<keyword id="KW-0346">Stress response</keyword>
<keyword id="KW-0812">Transmembrane</keyword>
<keyword id="KW-1133">Transmembrane helix</keyword>
<keyword id="KW-0862">Zinc</keyword>
<comment type="cofactor">
    <cofactor evidence="1">
        <name>Zn(2+)</name>
        <dbReference type="ChEBI" id="CHEBI:29105"/>
    </cofactor>
    <text evidence="1">Binds 1 zinc ion per subunit.</text>
</comment>
<comment type="subcellular location">
    <subcellularLocation>
        <location evidence="1">Cell inner membrane</location>
        <topology evidence="1">Multi-pass membrane protein</topology>
    </subcellularLocation>
</comment>
<comment type="similarity">
    <text evidence="1">Belongs to the peptidase M48B family.</text>
</comment>
<evidence type="ECO:0000255" key="1">
    <source>
        <dbReference type="HAMAP-Rule" id="MF_00188"/>
    </source>
</evidence>
<protein>
    <recommendedName>
        <fullName evidence="1">Protease HtpX</fullName>
        <ecNumber evidence="1">3.4.24.-</ecNumber>
    </recommendedName>
    <alternativeName>
        <fullName evidence="1">Heat shock protein HtpX</fullName>
    </alternativeName>
</protein>